<gene>
    <name evidence="14" type="primary">Plpp3</name>
    <name type="synonym">Lpp3</name>
    <name type="synonym">Ppap2b</name>
</gene>
<evidence type="ECO:0000250" key="1">
    <source>
        <dbReference type="UniProtKB" id="O14495"/>
    </source>
</evidence>
<evidence type="ECO:0000250" key="2">
    <source>
        <dbReference type="UniProtKB" id="O34349"/>
    </source>
</evidence>
<evidence type="ECO:0000250" key="3">
    <source>
        <dbReference type="UniProtKB" id="P97544"/>
    </source>
</evidence>
<evidence type="ECO:0000255" key="4"/>
<evidence type="ECO:0000269" key="5">
    <source>
    </source>
</evidence>
<evidence type="ECO:0000269" key="6">
    <source>
    </source>
</evidence>
<evidence type="ECO:0000269" key="7">
    <source>
    </source>
</evidence>
<evidence type="ECO:0000269" key="8">
    <source>
    </source>
</evidence>
<evidence type="ECO:0000269" key="9">
    <source>
    </source>
</evidence>
<evidence type="ECO:0000269" key="10">
    <source>
    </source>
</evidence>
<evidence type="ECO:0000269" key="11">
    <source>
    </source>
</evidence>
<evidence type="ECO:0000305" key="12"/>
<evidence type="ECO:0000305" key="13">
    <source>
    </source>
</evidence>
<evidence type="ECO:0000312" key="14">
    <source>
        <dbReference type="MGI" id="MGI:1915166"/>
    </source>
</evidence>
<proteinExistence type="evidence at protein level"/>
<feature type="chain" id="PRO_0000220913" description="Phospholipid phosphatase 3">
    <location>
        <begin position="1"/>
        <end position="312"/>
    </location>
</feature>
<feature type="topological domain" description="Cytoplasmic" evidence="13">
    <location>
        <begin position="1"/>
        <end position="33"/>
    </location>
</feature>
<feature type="transmembrane region" description="Helical" evidence="4">
    <location>
        <begin position="34"/>
        <end position="54"/>
    </location>
</feature>
<feature type="topological domain" description="Extracellular" evidence="13">
    <location>
        <begin position="55"/>
        <end position="85"/>
    </location>
</feature>
<feature type="transmembrane region" description="Helical" evidence="4">
    <location>
        <begin position="86"/>
        <end position="106"/>
    </location>
</feature>
<feature type="topological domain" description="Cytoplasmic" evidence="13">
    <location>
        <begin position="107"/>
        <end position="123"/>
    </location>
</feature>
<feature type="transmembrane region" description="Helical" evidence="4">
    <location>
        <begin position="124"/>
        <end position="144"/>
    </location>
</feature>
<feature type="topological domain" description="Extracellular" evidence="6">
    <location>
        <begin position="145"/>
        <end position="194"/>
    </location>
</feature>
<feature type="transmembrane region" description="Helical" evidence="4">
    <location>
        <begin position="195"/>
        <end position="215"/>
    </location>
</feature>
<feature type="topological domain" description="Cytoplasmic" evidence="13">
    <location>
        <begin position="216"/>
        <end position="226"/>
    </location>
</feature>
<feature type="transmembrane region" description="Helical" evidence="4">
    <location>
        <begin position="227"/>
        <end position="244"/>
    </location>
</feature>
<feature type="topological domain" description="Extracellular" evidence="13">
    <location>
        <begin position="245"/>
        <end position="258"/>
    </location>
</feature>
<feature type="transmembrane region" description="Helical" evidence="4">
    <location>
        <begin position="259"/>
        <end position="279"/>
    </location>
</feature>
<feature type="topological domain" description="Cytoplasmic" evidence="13">
    <location>
        <begin position="280"/>
        <end position="312"/>
    </location>
</feature>
<feature type="region of interest" description="Phosphatase sequence motif I" evidence="2">
    <location>
        <begin position="149"/>
        <end position="157"/>
    </location>
</feature>
<feature type="region of interest" description="Phosphatase sequence motif II" evidence="2">
    <location>
        <begin position="197"/>
        <end position="200"/>
    </location>
</feature>
<feature type="region of interest" description="Phosphatase sequence motif III" evidence="2">
    <location>
        <begin position="245"/>
        <end position="256"/>
    </location>
</feature>
<feature type="region of interest" description="Mediates interaction with CTNND1" evidence="1">
    <location>
        <begin position="276"/>
        <end position="312"/>
    </location>
</feature>
<feature type="short sequence motif" description="Dityrosine basolateral targeting motif" evidence="1">
    <location>
        <begin position="109"/>
        <end position="110"/>
    </location>
</feature>
<feature type="short sequence motif" description="Integrin-binding motif" evidence="6">
    <location>
        <begin position="183"/>
        <end position="185"/>
    </location>
</feature>
<feature type="active site" description="Proton donors" evidence="2">
    <location>
        <position position="200"/>
    </location>
</feature>
<feature type="active site" description="Nucleophile" evidence="2">
    <location>
        <position position="252"/>
    </location>
</feature>
<feature type="site" description="Stabilizes the active site histidine for nucleophilic attack" evidence="2">
    <location>
        <position position="256"/>
    </location>
</feature>
<feature type="modified residue" description="Phosphoserine" evidence="1">
    <location>
        <position position="19"/>
    </location>
</feature>
<feature type="glycosylation site" description="N-linked (GlcNAc...) asparagine" evidence="4">
    <location>
        <position position="171"/>
    </location>
</feature>
<feature type="sequence conflict" description="In Ref. 1; BAE34848." evidence="12" ref="1">
    <original>S</original>
    <variation>C</variation>
    <location>
        <position position="187"/>
    </location>
</feature>
<reference key="1">
    <citation type="journal article" date="2005" name="Science">
        <title>The transcriptional landscape of the mammalian genome.</title>
        <authorList>
            <person name="Carninci P."/>
            <person name="Kasukawa T."/>
            <person name="Katayama S."/>
            <person name="Gough J."/>
            <person name="Frith M.C."/>
            <person name="Maeda N."/>
            <person name="Oyama R."/>
            <person name="Ravasi T."/>
            <person name="Lenhard B."/>
            <person name="Wells C."/>
            <person name="Kodzius R."/>
            <person name="Shimokawa K."/>
            <person name="Bajic V.B."/>
            <person name="Brenner S.E."/>
            <person name="Batalov S."/>
            <person name="Forrest A.R."/>
            <person name="Zavolan M."/>
            <person name="Davis M.J."/>
            <person name="Wilming L.G."/>
            <person name="Aidinis V."/>
            <person name="Allen J.E."/>
            <person name="Ambesi-Impiombato A."/>
            <person name="Apweiler R."/>
            <person name="Aturaliya R.N."/>
            <person name="Bailey T.L."/>
            <person name="Bansal M."/>
            <person name="Baxter L."/>
            <person name="Beisel K.W."/>
            <person name="Bersano T."/>
            <person name="Bono H."/>
            <person name="Chalk A.M."/>
            <person name="Chiu K.P."/>
            <person name="Choudhary V."/>
            <person name="Christoffels A."/>
            <person name="Clutterbuck D.R."/>
            <person name="Crowe M.L."/>
            <person name="Dalla E."/>
            <person name="Dalrymple B.P."/>
            <person name="de Bono B."/>
            <person name="Della Gatta G."/>
            <person name="di Bernardo D."/>
            <person name="Down T."/>
            <person name="Engstrom P."/>
            <person name="Fagiolini M."/>
            <person name="Faulkner G."/>
            <person name="Fletcher C.F."/>
            <person name="Fukushima T."/>
            <person name="Furuno M."/>
            <person name="Futaki S."/>
            <person name="Gariboldi M."/>
            <person name="Georgii-Hemming P."/>
            <person name="Gingeras T.R."/>
            <person name="Gojobori T."/>
            <person name="Green R.E."/>
            <person name="Gustincich S."/>
            <person name="Harbers M."/>
            <person name="Hayashi Y."/>
            <person name="Hensch T.K."/>
            <person name="Hirokawa N."/>
            <person name="Hill D."/>
            <person name="Huminiecki L."/>
            <person name="Iacono M."/>
            <person name="Ikeo K."/>
            <person name="Iwama A."/>
            <person name="Ishikawa T."/>
            <person name="Jakt M."/>
            <person name="Kanapin A."/>
            <person name="Katoh M."/>
            <person name="Kawasawa Y."/>
            <person name="Kelso J."/>
            <person name="Kitamura H."/>
            <person name="Kitano H."/>
            <person name="Kollias G."/>
            <person name="Krishnan S.P."/>
            <person name="Kruger A."/>
            <person name="Kummerfeld S.K."/>
            <person name="Kurochkin I.V."/>
            <person name="Lareau L.F."/>
            <person name="Lazarevic D."/>
            <person name="Lipovich L."/>
            <person name="Liu J."/>
            <person name="Liuni S."/>
            <person name="McWilliam S."/>
            <person name="Madan Babu M."/>
            <person name="Madera M."/>
            <person name="Marchionni L."/>
            <person name="Matsuda H."/>
            <person name="Matsuzawa S."/>
            <person name="Miki H."/>
            <person name="Mignone F."/>
            <person name="Miyake S."/>
            <person name="Morris K."/>
            <person name="Mottagui-Tabar S."/>
            <person name="Mulder N."/>
            <person name="Nakano N."/>
            <person name="Nakauchi H."/>
            <person name="Ng P."/>
            <person name="Nilsson R."/>
            <person name="Nishiguchi S."/>
            <person name="Nishikawa S."/>
            <person name="Nori F."/>
            <person name="Ohara O."/>
            <person name="Okazaki Y."/>
            <person name="Orlando V."/>
            <person name="Pang K.C."/>
            <person name="Pavan W.J."/>
            <person name="Pavesi G."/>
            <person name="Pesole G."/>
            <person name="Petrovsky N."/>
            <person name="Piazza S."/>
            <person name="Reed J."/>
            <person name="Reid J.F."/>
            <person name="Ring B.Z."/>
            <person name="Ringwald M."/>
            <person name="Rost B."/>
            <person name="Ruan Y."/>
            <person name="Salzberg S.L."/>
            <person name="Sandelin A."/>
            <person name="Schneider C."/>
            <person name="Schoenbach C."/>
            <person name="Sekiguchi K."/>
            <person name="Semple C.A."/>
            <person name="Seno S."/>
            <person name="Sessa L."/>
            <person name="Sheng Y."/>
            <person name="Shibata Y."/>
            <person name="Shimada H."/>
            <person name="Shimada K."/>
            <person name="Silva D."/>
            <person name="Sinclair B."/>
            <person name="Sperling S."/>
            <person name="Stupka E."/>
            <person name="Sugiura K."/>
            <person name="Sultana R."/>
            <person name="Takenaka Y."/>
            <person name="Taki K."/>
            <person name="Tammoja K."/>
            <person name="Tan S.L."/>
            <person name="Tang S."/>
            <person name="Taylor M.S."/>
            <person name="Tegner J."/>
            <person name="Teichmann S.A."/>
            <person name="Ueda H.R."/>
            <person name="van Nimwegen E."/>
            <person name="Verardo R."/>
            <person name="Wei C.L."/>
            <person name="Yagi K."/>
            <person name="Yamanishi H."/>
            <person name="Zabarovsky E."/>
            <person name="Zhu S."/>
            <person name="Zimmer A."/>
            <person name="Hide W."/>
            <person name="Bult C."/>
            <person name="Grimmond S.M."/>
            <person name="Teasdale R.D."/>
            <person name="Liu E.T."/>
            <person name="Brusic V."/>
            <person name="Quackenbush J."/>
            <person name="Wahlestedt C."/>
            <person name="Mattick J.S."/>
            <person name="Hume D.A."/>
            <person name="Kai C."/>
            <person name="Sasaki D."/>
            <person name="Tomaru Y."/>
            <person name="Fukuda S."/>
            <person name="Kanamori-Katayama M."/>
            <person name="Suzuki M."/>
            <person name="Aoki J."/>
            <person name="Arakawa T."/>
            <person name="Iida J."/>
            <person name="Imamura K."/>
            <person name="Itoh M."/>
            <person name="Kato T."/>
            <person name="Kawaji H."/>
            <person name="Kawagashira N."/>
            <person name="Kawashima T."/>
            <person name="Kojima M."/>
            <person name="Kondo S."/>
            <person name="Konno H."/>
            <person name="Nakano K."/>
            <person name="Ninomiya N."/>
            <person name="Nishio T."/>
            <person name="Okada M."/>
            <person name="Plessy C."/>
            <person name="Shibata K."/>
            <person name="Shiraki T."/>
            <person name="Suzuki S."/>
            <person name="Tagami M."/>
            <person name="Waki K."/>
            <person name="Watahiki A."/>
            <person name="Okamura-Oho Y."/>
            <person name="Suzuki H."/>
            <person name="Kawai J."/>
            <person name="Hayashizaki Y."/>
        </authorList>
    </citation>
    <scope>NUCLEOTIDE SEQUENCE [LARGE SCALE MRNA]</scope>
    <source>
        <strain>C57BL/6J</strain>
    </source>
</reference>
<reference key="2">
    <citation type="journal article" date="2004" name="Genome Res.">
        <title>The status, quality, and expansion of the NIH full-length cDNA project: the Mammalian Gene Collection (MGC).</title>
        <authorList>
            <consortium name="The MGC Project Team"/>
        </authorList>
    </citation>
    <scope>NUCLEOTIDE SEQUENCE [LARGE SCALE MRNA]</scope>
    <source>
        <strain>FVB/N</strain>
        <tissue>Mammary gland</tissue>
    </source>
</reference>
<reference key="3">
    <citation type="submission" date="2007-04" db="UniProtKB">
        <authorList>
            <person name="Lubec G."/>
            <person name="Kang S.U."/>
        </authorList>
    </citation>
    <scope>PROTEIN SEQUENCE OF 283-293</scope>
    <scope>IDENTIFICATION BY MASS SPECTROMETRY</scope>
    <source>
        <strain>C57BL/6J</strain>
        <tissue>Brain</tissue>
    </source>
</reference>
<reference key="4">
    <citation type="journal article" date="2003" name="Development">
        <title>The lipid phosphatase LPP3 regulates extra-embryonic vasculogenesis and axis patterning.</title>
        <authorList>
            <person name="Escalante-Alcalde D."/>
            <person name="Hernandez L."/>
            <person name="Le Stunff H."/>
            <person name="Maeda R."/>
            <person name="Lee H.-S."/>
            <person name="Cheng G. Jr."/>
            <person name="Sciorra V.A."/>
            <person name="Daar I."/>
            <person name="Spiegel S."/>
            <person name="Morris A.J."/>
            <person name="Stewart C.L."/>
        </authorList>
    </citation>
    <scope>FUNCTION</scope>
    <scope>CATALYTIC ACTIVITY</scope>
    <scope>PATHWAY</scope>
    <scope>TISSUE SPECIFICITY</scope>
    <scope>DEVELOPMENTAL STAGE</scope>
    <scope>DISRUPTION PHENOTYPE</scope>
</reference>
<reference key="5">
    <citation type="journal article" date="2005" name="Biochem. Biophys. Res. Commun.">
        <title>Murine lipid phosphate phosphohydrolase-3 acts as a cell-associated integrin ligand.</title>
        <authorList>
            <person name="Humtsoe J.O."/>
            <person name="Bowling R.A. Jr."/>
            <person name="Feng S."/>
            <person name="Wary K.K."/>
        </authorList>
    </citation>
    <scope>FUNCTION</scope>
    <scope>SUBCELLULAR LOCATION</scope>
    <scope>DOMAIN</scope>
    <scope>TOPOLOGY</scope>
    <scope>MOTIF</scope>
</reference>
<reference key="6">
    <citation type="journal article" date="2007" name="Genesis">
        <title>Generation of a conditional Ppap2b/Lpp3 null allele.</title>
        <authorList>
            <person name="Escalante-Alcalde D."/>
            <person name="Sanchez-Sanchez R."/>
            <person name="Stewart C.L."/>
        </authorList>
    </citation>
    <scope>DISRUPTION PHENOTYPE</scope>
</reference>
<reference key="7">
    <citation type="journal article" date="2009" name="Int. J. Dev. Biol.">
        <title>Generation of a reporter-null allele of Ppap2b/Lpp3and its expression during embryogenesis.</title>
        <authorList>
            <person name="Escalante-Alcalde D."/>
            <person name="Morales S.L."/>
            <person name="Stewart C.L."/>
        </authorList>
    </citation>
    <scope>DEVELOPMENTAL STAGE</scope>
    <scope>DISRUPTION PHENOTYPE</scope>
</reference>
<reference key="8">
    <citation type="journal article" date="2010" name="Cell">
        <title>A tissue-specific atlas of mouse protein phosphorylation and expression.</title>
        <authorList>
            <person name="Huttlin E.L."/>
            <person name="Jedrychowski M.P."/>
            <person name="Elias J.E."/>
            <person name="Goswami T."/>
            <person name="Rad R."/>
            <person name="Beausoleil S.A."/>
            <person name="Villen J."/>
            <person name="Haas W."/>
            <person name="Sowa M.E."/>
            <person name="Gygi S.P."/>
        </authorList>
    </citation>
    <scope>IDENTIFICATION BY MASS SPECTROMETRY [LARGE SCALE ANALYSIS]</scope>
    <source>
        <tissue>Brain</tissue>
        <tissue>Kidney</tissue>
    </source>
</reference>
<reference key="9">
    <citation type="journal article" date="2011" name="Glia">
        <title>Expression of LPP3 in Bergmann glia is required for proper cerebellar sphingosine-1-phosphate metabolism/signaling and development.</title>
        <authorList>
            <person name="Lopez-Juarez A."/>
            <person name="Morales-Lazaro S."/>
            <person name="Sanchez-Sanchez R."/>
            <person name="Sunkara M."/>
            <person name="Lomeli H."/>
            <person name="Velasco I."/>
            <person name="Morris A.J."/>
            <person name="Escalante-Alcalde D."/>
        </authorList>
    </citation>
    <scope>FUNCTION</scope>
    <scope>CATALYTIC ACTIVITY</scope>
    <scope>SUBSTRATE SPECIFICITY</scope>
    <scope>PATHWAY</scope>
    <scope>SUBCELLULAR LOCATION</scope>
    <scope>TISSUE SPECIFICITY</scope>
    <scope>DISRUPTION PHENOTYPE</scope>
</reference>
<reference key="10">
    <citation type="journal article" date="2016" name="Cardiovasc. Res.">
        <title>Endothelial lipid phosphate phosphatase-3 deficiency that disrupts the endothelial barrier function is a modifier of cardiovascular development.</title>
        <authorList>
            <person name="Chatterjee I."/>
            <person name="Baruah J."/>
            <person name="Lurie E.E."/>
            <person name="Wary K.K."/>
        </authorList>
    </citation>
    <scope>FUNCTION</scope>
    <scope>DISRUPTION PHENOTYPE</scope>
</reference>
<reference key="11">
    <citation type="journal article" date="2018" name="PLoS ONE">
        <title>Lipid phosphate phosphatase 3 regulates adipocyte sphingolipid synthesis, but not developmental adipogenesis or diet-induced obesity in mice.</title>
        <authorList>
            <person name="Federico L."/>
            <person name="Yang L."/>
            <person name="Brandon J."/>
            <person name="Panchatcharam M."/>
            <person name="Ren H."/>
            <person name="Mueller P."/>
            <person name="Sunkara M."/>
            <person name="Escalante-Alcalde D."/>
            <person name="Morris A.J."/>
            <person name="Smyth S.S."/>
        </authorList>
    </citation>
    <scope>DISRUPTION PHENOTYPE</scope>
</reference>
<comment type="function">
    <text evidence="1 9">Magnesium-independent phospholipid phosphatase of the plasma membrane that catalyzes the dephosphorylation of a variety of glycerolipid and sphingolipid phosphate esters including phosphatidate/PA, lysophosphatidate/LPA, diacylglycerol pyrophosphate/DGPP, sphingosine 1-phosphate/S1P and ceramide 1-phosphate/C1P. Also acts on N-oleoyl ethanolamine phosphate/N-(9Z-octadecenoyl)-ethanolamine phosphate, a potential physiological compound. Has both an extracellular and an intracellular phosphatase activity, allowing the hydrolysis and the cellular uptake of these bioactive lipid mediators from the milieu, regulating signal transduction in different cellular processes. Through the dephosphorylation of extracellular sphingosine-1-phosphate and the regulation of its extra- and intracellular availability, plays a role in vascular homeostasis, regulating endothelial cell migration, adhesion, survival, proliferation and the production of pro-inflammatory cytokines (By similarity). By maintaining the appropriate levels of this lipid in the cerebellum, also ensure its proper development and function (PubMed:21319224). Through its intracellular lipid phosphatase activity may act in early compartments of the secretory pathway, regulating the formation of Golgi to endoplasmic reticulum retrograde transport carriers (By similarity).</text>
</comment>
<comment type="function">
    <text evidence="5 6 10">Independently of this phosphatase activity may also function in the Wnt signaling pathway and the stabilization of beta-catenin/CTNNB1, thereby regulating cell proliferation, migration and differentiation in angiogenesis or yet in tumor growth (PubMed:12925589, PubMed:27125875). Also plays a role in integrin-mediated cell-cell adhesion in angiogenesis (PubMed:16099422).</text>
</comment>
<comment type="catalytic activity">
    <reaction evidence="5">
        <text>a 1,2-diacyl-sn-glycero-3-phosphate + H2O = a 1,2-diacyl-sn-glycerol + phosphate</text>
        <dbReference type="Rhea" id="RHEA:27429"/>
        <dbReference type="ChEBI" id="CHEBI:15377"/>
        <dbReference type="ChEBI" id="CHEBI:17815"/>
        <dbReference type="ChEBI" id="CHEBI:43474"/>
        <dbReference type="ChEBI" id="CHEBI:58608"/>
        <dbReference type="EC" id="3.1.3.4"/>
    </reaction>
    <physiologicalReaction direction="left-to-right" evidence="5">
        <dbReference type="Rhea" id="RHEA:27430"/>
    </physiologicalReaction>
</comment>
<comment type="catalytic activity">
    <reaction evidence="1">
        <text>1,2-dihexadecanoyl-sn-glycero-3-phosphate + H2O = 1,2-dihexadecanoyl-sn-glycerol + phosphate</text>
        <dbReference type="Rhea" id="RHEA:43236"/>
        <dbReference type="ChEBI" id="CHEBI:15377"/>
        <dbReference type="ChEBI" id="CHEBI:43474"/>
        <dbReference type="ChEBI" id="CHEBI:72859"/>
        <dbReference type="ChEBI" id="CHEBI:82929"/>
    </reaction>
    <physiologicalReaction direction="left-to-right" evidence="1">
        <dbReference type="Rhea" id="RHEA:43237"/>
    </physiologicalReaction>
</comment>
<comment type="catalytic activity">
    <reaction evidence="1">
        <text>1,2-di-(9Z-octadecenoyl)-sn-glycero-3-phosphate + H2O = 1,2-di-(9Z-octadecenoyl)-sn-glycerol + phosphate</text>
        <dbReference type="Rhea" id="RHEA:43244"/>
        <dbReference type="ChEBI" id="CHEBI:15377"/>
        <dbReference type="ChEBI" id="CHEBI:43474"/>
        <dbReference type="ChEBI" id="CHEBI:52333"/>
        <dbReference type="ChEBI" id="CHEBI:74546"/>
    </reaction>
    <physiologicalReaction direction="left-to-right" evidence="1">
        <dbReference type="Rhea" id="RHEA:43245"/>
    </physiologicalReaction>
</comment>
<comment type="catalytic activity">
    <reaction evidence="5">
        <text>a monoacyl-sn-glycero-3-phosphate + H2O = a monoacylglycerol + phosphate</text>
        <dbReference type="Rhea" id="RHEA:46736"/>
        <dbReference type="ChEBI" id="CHEBI:15377"/>
        <dbReference type="ChEBI" id="CHEBI:17408"/>
        <dbReference type="ChEBI" id="CHEBI:43474"/>
        <dbReference type="ChEBI" id="CHEBI:77589"/>
    </reaction>
    <physiologicalReaction direction="left-to-right" evidence="5">
        <dbReference type="Rhea" id="RHEA:46737"/>
    </physiologicalReaction>
</comment>
<comment type="catalytic activity">
    <reaction evidence="1">
        <text>(9Z)-octadecenoyl-sn-glycero-3-phosphate + H2O = (9Z-octadecenoyl)-glycerol + phosphate</text>
        <dbReference type="Rhea" id="RHEA:50884"/>
        <dbReference type="ChEBI" id="CHEBI:15377"/>
        <dbReference type="ChEBI" id="CHEBI:43474"/>
        <dbReference type="ChEBI" id="CHEBI:75937"/>
        <dbReference type="ChEBI" id="CHEBI:84973"/>
    </reaction>
    <physiologicalReaction direction="left-to-right" evidence="1">
        <dbReference type="Rhea" id="RHEA:50885"/>
    </physiologicalReaction>
</comment>
<comment type="catalytic activity">
    <reaction evidence="9">
        <text>sphing-4-enine 1-phosphate + H2O = sphing-4-enine + phosphate</text>
        <dbReference type="Rhea" id="RHEA:27518"/>
        <dbReference type="ChEBI" id="CHEBI:15377"/>
        <dbReference type="ChEBI" id="CHEBI:43474"/>
        <dbReference type="ChEBI" id="CHEBI:57756"/>
        <dbReference type="ChEBI" id="CHEBI:60119"/>
    </reaction>
    <physiologicalReaction direction="left-to-right" evidence="9">
        <dbReference type="Rhea" id="RHEA:27519"/>
    </physiologicalReaction>
</comment>
<comment type="catalytic activity">
    <reaction evidence="1">
        <text>an N-acylsphing-4-enine 1-phosphate + H2O = an N-acylsphing-4-enine + phosphate</text>
        <dbReference type="Rhea" id="RHEA:33743"/>
        <dbReference type="ChEBI" id="CHEBI:15377"/>
        <dbReference type="ChEBI" id="CHEBI:43474"/>
        <dbReference type="ChEBI" id="CHEBI:52639"/>
        <dbReference type="ChEBI" id="CHEBI:57674"/>
    </reaction>
    <physiologicalReaction direction="left-to-right" evidence="1">
        <dbReference type="Rhea" id="RHEA:33744"/>
    </physiologicalReaction>
</comment>
<comment type="catalytic activity">
    <reaction evidence="1">
        <text>N-(octanoyl)-sphing-4-enine-1-phosphate + H2O = N-octanoylsphing-4-enine + phosphate</text>
        <dbReference type="Rhea" id="RHEA:62040"/>
        <dbReference type="ChEBI" id="CHEBI:15377"/>
        <dbReference type="ChEBI" id="CHEBI:43474"/>
        <dbReference type="ChEBI" id="CHEBI:45815"/>
        <dbReference type="ChEBI" id="CHEBI:85376"/>
    </reaction>
    <physiologicalReaction direction="left-to-right" evidence="1">
        <dbReference type="Rhea" id="RHEA:62041"/>
    </physiologicalReaction>
</comment>
<comment type="catalytic activity">
    <reaction evidence="1">
        <text>N-(9Z-octadecenoyl)-ethanolamine phosphate + H2O = N-(9Z-octadecenoyl) ethanolamine + phosphate</text>
        <dbReference type="Rhea" id="RHEA:62160"/>
        <dbReference type="ChEBI" id="CHEBI:15377"/>
        <dbReference type="ChEBI" id="CHEBI:43474"/>
        <dbReference type="ChEBI" id="CHEBI:71466"/>
        <dbReference type="ChEBI" id="CHEBI:145465"/>
    </reaction>
    <physiologicalReaction direction="left-to-right" evidence="1">
        <dbReference type="Rhea" id="RHEA:62161"/>
    </physiologicalReaction>
</comment>
<comment type="activity regulation">
    <text evidence="1">Magnesium-independent phospholipid phosphatase. Insensitive to N-ethylmaleimide.</text>
</comment>
<comment type="pathway">
    <text evidence="5 9">Lipid metabolism; phospholipid metabolism.</text>
</comment>
<comment type="subunit">
    <text evidence="1">Forms functional homodimers and homooligomers that are not required for substrate recognition and catalytic activity. Can also form heterooligomers with other PLPP2 and PLPP3. Interacts with CTNND1; negatively regulates the PLPP3-mediated stabilization of beta-catenin/CTNNB1.</text>
</comment>
<comment type="subcellular location">
    <subcellularLocation>
        <location evidence="6 9">Cell membrane</location>
        <topology evidence="3">Multi-pass membrane protein</topology>
    </subcellularLocation>
    <subcellularLocation>
        <location evidence="1">Basolateral cell membrane</location>
        <topology evidence="3">Multi-pass membrane protein</topology>
    </subcellularLocation>
    <subcellularLocation>
        <location evidence="1">Endoplasmic reticulum membrane</location>
        <topology evidence="3">Multi-pass membrane protein</topology>
    </subcellularLocation>
    <subcellularLocation>
        <location evidence="1">Endoplasmic reticulum-Golgi intermediate compartment membrane</location>
        <topology evidence="3">Multi-pass membrane protein</topology>
    </subcellularLocation>
    <subcellularLocation>
        <location evidence="1">Golgi apparatus membrane</location>
        <topology evidence="3">Multi-pass membrane protein</topology>
    </subcellularLocation>
    <subcellularLocation>
        <location evidence="1">Golgi apparatus</location>
        <location evidence="1">trans-Golgi network membrane</location>
        <topology evidence="3">Multi-pass membrane protein</topology>
    </subcellularLocation>
    <subcellularLocation>
        <location evidence="1">Membrane raft</location>
        <topology evidence="3">Multi-pass membrane protein</topology>
    </subcellularLocation>
    <text evidence="1">Cycles between the endoplasmic reticulum and the Golgi.</text>
</comment>
<comment type="tissue specificity">
    <text evidence="5 9">Detected in lung, cerebellum and heart atrium.</text>
</comment>
<comment type="developmental stage">
    <text evidence="5 8">Display a characteristic dynamic and changing pattern of expression throughout the life cycle of the mouse (PubMed:12925589). Expression during early stages of development is specific of structures where multiple inductive interactions occur such as the limb buds, mammary gland primordia, heart cushions and valves among others (PubMed:19123136). Detected in a few cells of the extra-embryonic ectoderm of 6.5 dpc embryos. By 7.5 dpc, starts to be strongly expressed in the anterior visceral endoderm, as well as in the extra-embryonic membranes. By 8.0 dpc, expression extends to a highly localized region around the node and appears at the tip of the allantois. At 8.5 dpc, predominantly expressed in the allantois, the developing gut, the pericardio-peritoneal canal and somites. In 9.5 dpc embryos, persists in the umbilical cord, and is also found in the chorionic region. In later mid-gestation embryos, present at high levels in the apical ectodermal ridge and mesenchyme of the limb buds, in the peripheral nervous system, cranial nerves, and mammary gland primordia (PubMed:12925589).</text>
</comment>
<comment type="domain">
    <text evidence="6">The integrin-binding motif mediates the binding to integrin alpha-5/beta-1 (ITGA5:ITGB1) and integrin alpha-V/beta-3 (ITGAV:ITGB3) and is required for the function in integrin-mediated cell-cell adhesion.</text>
</comment>
<comment type="domain">
    <text evidence="1">The dityrosine basolateral targeting motif mediates localization to the basolateral membrane in polarized cells.</text>
</comment>
<comment type="PTM">
    <text evidence="1">N-glycosylated. Contains high-mannose oligosaccharides.</text>
</comment>
<comment type="disruption phenotype">
    <text evidence="5 7 8 9 10 11">The homozygous knockout of Plpp3 is embryonic lethal (PubMed:12925589, PubMed:17610274, PubMed:19123136). It is characterized by a delay in development, absence of chorioallantoic fusion at the 6 somite stage, allantois compaction, impaired remodeling of the primary capillary plexus of the yolk sac and gastrulation defects with low penetrance. Persistence of open neural tube is also frequently observed (PubMed:12925589, PubMed:19123136). Conditional knockout of Plpp3 in the cerebellum is associated with defects in postnatal cerebellum development, modifications in the cytoarchitecture and arrangement of Bergmann glia with a mild non-progressive motor coordination defect (PubMed:21319224). Conditional knockout of Plpp3 in endothelial cells is associated with vascular leakage and hemorrhage that likely result in insufficient cardiovascular development and the observed embryonic lethality (PubMed:27125875). Conditional knockout of Plpp3 in adipocytes does not affect the development of the adipose tissue. However, mutant homozygous mice display lower accumulation of ceramide and sphingomyelin on high fat or Western diets compared to control animals (PubMed:29889835).</text>
</comment>
<comment type="similarity">
    <text evidence="12">Belongs to the PA-phosphatase related phosphoesterase family.</text>
</comment>
<keyword id="KW-1003">Cell membrane</keyword>
<keyword id="KW-0217">Developmental protein</keyword>
<keyword id="KW-0903">Direct protein sequencing</keyword>
<keyword id="KW-0256">Endoplasmic reticulum</keyword>
<keyword id="KW-0325">Glycoprotein</keyword>
<keyword id="KW-0333">Golgi apparatus</keyword>
<keyword id="KW-0378">Hydrolase</keyword>
<keyword id="KW-0443">Lipid metabolism</keyword>
<keyword id="KW-0472">Membrane</keyword>
<keyword id="KW-0597">Phosphoprotein</keyword>
<keyword id="KW-1185">Reference proteome</keyword>
<keyword id="KW-0812">Transmembrane</keyword>
<keyword id="KW-1133">Transmembrane helix</keyword>
<protein>
    <recommendedName>
        <fullName evidence="12">Phospholipid phosphatase 3</fullName>
        <ecNumber evidence="5 9">3.1.3.-</ecNumber>
        <ecNumber evidence="5">3.1.3.4</ecNumber>
    </recommendedName>
    <alternativeName>
        <fullName>Lipid phosphate phosphohydrolase 3</fullName>
    </alternativeName>
    <alternativeName>
        <fullName>PAP2-beta</fullName>
    </alternativeName>
    <alternativeName>
        <fullName>Phosphatidate phosphohydrolase type 2b</fullName>
    </alternativeName>
    <alternativeName>
        <fullName>Phosphatidic acid phosphatase 2b</fullName>
        <shortName>PAP-2b</shortName>
        <shortName>PAP2b</shortName>
    </alternativeName>
</protein>
<sequence length="312" mass="35216">MQSYKYDKAIVPESKNGGSPALNNNPRKGGSKRVLLICLDLFCLFMAALPFLIIETSTIKPYRRGFYCNDESIKYPLKVSETINDAVLCAVGIVIAILAIITGEFYRIYYLKEKSRSTTQNPYVAALYKQVGCFLFGCAISQSFTDIAKVSIGRLRPHFLSVCDPDFSQINCSEGYIQNYRCRGEDSKVQEARKSFFSGHASFSMFTMLYLVLYLQARFTWRGARLLRPLLQFTLLMMAFYTGLSRVSDYKHHPSDVLAGFAQGALVACCIVFFVSDLFKTKTSLSLPAPAIRREILSPVDIIDRNNHHNMV</sequence>
<organism>
    <name type="scientific">Mus musculus</name>
    <name type="common">Mouse</name>
    <dbReference type="NCBI Taxonomy" id="10090"/>
    <lineage>
        <taxon>Eukaryota</taxon>
        <taxon>Metazoa</taxon>
        <taxon>Chordata</taxon>
        <taxon>Craniata</taxon>
        <taxon>Vertebrata</taxon>
        <taxon>Euteleostomi</taxon>
        <taxon>Mammalia</taxon>
        <taxon>Eutheria</taxon>
        <taxon>Euarchontoglires</taxon>
        <taxon>Glires</taxon>
        <taxon>Rodentia</taxon>
        <taxon>Myomorpha</taxon>
        <taxon>Muroidea</taxon>
        <taxon>Muridae</taxon>
        <taxon>Murinae</taxon>
        <taxon>Mus</taxon>
        <taxon>Mus</taxon>
    </lineage>
</organism>
<accession>Q99JY8</accession>
<accession>Q3TVM4</accession>
<accession>Q3TXR7</accession>
<accession>Q8BTB7</accession>
<dbReference type="EC" id="3.1.3.-" evidence="5 9"/>
<dbReference type="EC" id="3.1.3.4" evidence="5"/>
<dbReference type="EMBL" id="AK159136">
    <property type="protein sequence ID" value="BAE34848.1"/>
    <property type="molecule type" value="mRNA"/>
</dbReference>
<dbReference type="EMBL" id="AK160056">
    <property type="protein sequence ID" value="BAE35594.1"/>
    <property type="molecule type" value="mRNA"/>
</dbReference>
<dbReference type="EMBL" id="BC005558">
    <property type="protein sequence ID" value="AAH05558.1"/>
    <property type="molecule type" value="mRNA"/>
</dbReference>
<dbReference type="CCDS" id="CCDS18417.1"/>
<dbReference type="RefSeq" id="NP_542122.1">
    <property type="nucleotide sequence ID" value="NM_080555.2"/>
</dbReference>
<dbReference type="BioGRID" id="212532">
    <property type="interactions" value="7"/>
</dbReference>
<dbReference type="CORUM" id="Q99JY8"/>
<dbReference type="FunCoup" id="Q99JY8">
    <property type="interactions" value="1867"/>
</dbReference>
<dbReference type="IntAct" id="Q99JY8">
    <property type="interactions" value="6"/>
</dbReference>
<dbReference type="MINT" id="Q99JY8"/>
<dbReference type="STRING" id="10090.ENSMUSP00000065719"/>
<dbReference type="GlyConnect" id="2585">
    <property type="glycosylation" value="1 N-Linked glycan (1 site)"/>
</dbReference>
<dbReference type="GlyCosmos" id="Q99JY8">
    <property type="glycosylation" value="1 site, 1 glycan"/>
</dbReference>
<dbReference type="GlyGen" id="Q99JY8">
    <property type="glycosylation" value="1 site, 1 N-linked glycan (1 site)"/>
</dbReference>
<dbReference type="iPTMnet" id="Q99JY8"/>
<dbReference type="PhosphoSitePlus" id="Q99JY8"/>
<dbReference type="SwissPalm" id="Q99JY8"/>
<dbReference type="jPOST" id="Q99JY8"/>
<dbReference type="PaxDb" id="10090-ENSMUSP00000065719"/>
<dbReference type="PeptideAtlas" id="Q99JY8"/>
<dbReference type="ProteomicsDB" id="289772"/>
<dbReference type="Pumba" id="Q99JY8"/>
<dbReference type="DNASU" id="67916"/>
<dbReference type="Ensembl" id="ENSMUST00000064139.8">
    <property type="protein sequence ID" value="ENSMUSP00000065719.8"/>
    <property type="gene ID" value="ENSMUSG00000028517.9"/>
</dbReference>
<dbReference type="GeneID" id="67916"/>
<dbReference type="KEGG" id="mmu:67916"/>
<dbReference type="UCSC" id="uc008tye.1">
    <property type="organism name" value="mouse"/>
</dbReference>
<dbReference type="AGR" id="MGI:1915166"/>
<dbReference type="CTD" id="8613"/>
<dbReference type="MGI" id="MGI:1915166">
    <property type="gene designation" value="Plpp3"/>
</dbReference>
<dbReference type="VEuPathDB" id="HostDB:ENSMUSG00000028517"/>
<dbReference type="eggNOG" id="KOG3030">
    <property type="taxonomic scope" value="Eukaryota"/>
</dbReference>
<dbReference type="GeneTree" id="ENSGT00940000156450"/>
<dbReference type="HOGENOM" id="CLU_021458_3_0_1"/>
<dbReference type="InParanoid" id="Q99JY8"/>
<dbReference type="OMA" id="YPYKRST"/>
<dbReference type="OrthoDB" id="8907274at2759"/>
<dbReference type="PhylomeDB" id="Q99JY8"/>
<dbReference type="TreeFam" id="TF316040"/>
<dbReference type="BRENDA" id="3.1.3.4">
    <property type="organism ID" value="3474"/>
</dbReference>
<dbReference type="Reactome" id="R-MMU-9845614">
    <property type="pathway name" value="Sphingolipid catabolism"/>
</dbReference>
<dbReference type="UniPathway" id="UPA00085"/>
<dbReference type="BioGRID-ORCS" id="67916">
    <property type="hits" value="1 hit in 47 CRISPR screens"/>
</dbReference>
<dbReference type="CD-CODE" id="CE726F99">
    <property type="entry name" value="Postsynaptic density"/>
</dbReference>
<dbReference type="ChiTaRS" id="Plpp3">
    <property type="organism name" value="mouse"/>
</dbReference>
<dbReference type="PRO" id="PR:Q99JY8"/>
<dbReference type="Proteomes" id="UP000000589">
    <property type="component" value="Chromosome 4"/>
</dbReference>
<dbReference type="RNAct" id="Q99JY8">
    <property type="molecule type" value="protein"/>
</dbReference>
<dbReference type="Bgee" id="ENSMUSG00000028517">
    <property type="expression patterns" value="Expressed in vestibular membrane of cochlear duct and 293 other cell types or tissues"/>
</dbReference>
<dbReference type="GO" id="GO:0005912">
    <property type="term" value="C:adherens junction"/>
    <property type="evidence" value="ECO:0007669"/>
    <property type="project" value="Ensembl"/>
</dbReference>
<dbReference type="GO" id="GO:0016323">
    <property type="term" value="C:basolateral plasma membrane"/>
    <property type="evidence" value="ECO:0007669"/>
    <property type="project" value="UniProtKB-SubCell"/>
</dbReference>
<dbReference type="GO" id="GO:0070971">
    <property type="term" value="C:endoplasmic reticulum exit site"/>
    <property type="evidence" value="ECO:0000250"/>
    <property type="project" value="UniProtKB"/>
</dbReference>
<dbReference type="GO" id="GO:0005789">
    <property type="term" value="C:endoplasmic reticulum membrane"/>
    <property type="evidence" value="ECO:0007669"/>
    <property type="project" value="UniProtKB-SubCell"/>
</dbReference>
<dbReference type="GO" id="GO:0033116">
    <property type="term" value="C:endoplasmic reticulum-Golgi intermediate compartment membrane"/>
    <property type="evidence" value="ECO:0000250"/>
    <property type="project" value="UniProtKB"/>
</dbReference>
<dbReference type="GO" id="GO:0005794">
    <property type="term" value="C:Golgi apparatus"/>
    <property type="evidence" value="ECO:0000250"/>
    <property type="project" value="UniProtKB"/>
</dbReference>
<dbReference type="GO" id="GO:0000139">
    <property type="term" value="C:Golgi membrane"/>
    <property type="evidence" value="ECO:0007669"/>
    <property type="project" value="UniProtKB-SubCell"/>
</dbReference>
<dbReference type="GO" id="GO:0016020">
    <property type="term" value="C:membrane"/>
    <property type="evidence" value="ECO:0000250"/>
    <property type="project" value="UniProtKB"/>
</dbReference>
<dbReference type="GO" id="GO:0045121">
    <property type="term" value="C:membrane raft"/>
    <property type="evidence" value="ECO:0000250"/>
    <property type="project" value="UniProtKB"/>
</dbReference>
<dbReference type="GO" id="GO:0005886">
    <property type="term" value="C:plasma membrane"/>
    <property type="evidence" value="ECO:0000314"/>
    <property type="project" value="MGI"/>
</dbReference>
<dbReference type="GO" id="GO:0005802">
    <property type="term" value="C:trans-Golgi network"/>
    <property type="evidence" value="ECO:0000250"/>
    <property type="project" value="UniProtKB"/>
</dbReference>
<dbReference type="GO" id="GO:0106235">
    <property type="term" value="F:ceramide-1-phosphate phosphatase activity"/>
    <property type="evidence" value="ECO:0000250"/>
    <property type="project" value="UniProtKB"/>
</dbReference>
<dbReference type="GO" id="GO:0070097">
    <property type="term" value="F:delta-catenin binding"/>
    <property type="evidence" value="ECO:0007669"/>
    <property type="project" value="Ensembl"/>
</dbReference>
<dbReference type="GO" id="GO:0005178">
    <property type="term" value="F:integrin binding"/>
    <property type="evidence" value="ECO:0000314"/>
    <property type="project" value="MGI"/>
</dbReference>
<dbReference type="GO" id="GO:0042577">
    <property type="term" value="F:lipid phosphatase activity"/>
    <property type="evidence" value="ECO:0000315"/>
    <property type="project" value="MGI"/>
</dbReference>
<dbReference type="GO" id="GO:0008195">
    <property type="term" value="F:phosphatidate phosphatase activity"/>
    <property type="evidence" value="ECO:0000250"/>
    <property type="project" value="UniProtKB"/>
</dbReference>
<dbReference type="GO" id="GO:0042392">
    <property type="term" value="F:sphingosine-1-phosphate phosphatase activity"/>
    <property type="evidence" value="ECO:0000315"/>
    <property type="project" value="MGI"/>
</dbReference>
<dbReference type="GO" id="GO:0060020">
    <property type="term" value="P:Bergmann glial cell differentiation"/>
    <property type="evidence" value="ECO:0000315"/>
    <property type="project" value="MGI"/>
</dbReference>
<dbReference type="GO" id="GO:0001568">
    <property type="term" value="P:blood vessel development"/>
    <property type="evidence" value="ECO:0000315"/>
    <property type="project" value="MGI"/>
</dbReference>
<dbReference type="GO" id="GO:0007155">
    <property type="term" value="P:cell adhesion"/>
    <property type="evidence" value="ECO:0000314"/>
    <property type="project" value="MGI"/>
</dbReference>
<dbReference type="GO" id="GO:0098609">
    <property type="term" value="P:cell-cell adhesion"/>
    <property type="evidence" value="ECO:0000314"/>
    <property type="project" value="MGI"/>
</dbReference>
<dbReference type="GO" id="GO:0033631">
    <property type="term" value="P:cell-cell adhesion mediated by integrin"/>
    <property type="evidence" value="ECO:0000250"/>
    <property type="project" value="UniProtKB"/>
</dbReference>
<dbReference type="GO" id="GO:0006672">
    <property type="term" value="P:ceramide metabolic process"/>
    <property type="evidence" value="ECO:0000250"/>
    <property type="project" value="UniProtKB"/>
</dbReference>
<dbReference type="GO" id="GO:0001702">
    <property type="term" value="P:gastrulation with mouth forming second"/>
    <property type="evidence" value="ECO:0000315"/>
    <property type="project" value="MGI"/>
</dbReference>
<dbReference type="GO" id="GO:0007229">
    <property type="term" value="P:integrin-mediated signaling pathway"/>
    <property type="evidence" value="ECO:0000250"/>
    <property type="project" value="UniProtKB"/>
</dbReference>
<dbReference type="GO" id="GO:0046839">
    <property type="term" value="P:phospholipid dephosphorylation"/>
    <property type="evidence" value="ECO:0000250"/>
    <property type="project" value="UniProtKB"/>
</dbReference>
<dbReference type="GO" id="GO:0006644">
    <property type="term" value="P:phospholipid metabolic process"/>
    <property type="evidence" value="ECO:0000315"/>
    <property type="project" value="MGI"/>
</dbReference>
<dbReference type="GO" id="GO:0010595">
    <property type="term" value="P:positive regulation of endothelial cell migration"/>
    <property type="evidence" value="ECO:0007669"/>
    <property type="project" value="Ensembl"/>
</dbReference>
<dbReference type="GO" id="GO:1904906">
    <property type="term" value="P:positive regulation of endothelial cell-matrix adhesion via fibronectin"/>
    <property type="evidence" value="ECO:0000314"/>
    <property type="project" value="BHF-UCL"/>
</dbReference>
<dbReference type="GO" id="GO:0034112">
    <property type="term" value="P:positive regulation of homotypic cell-cell adhesion"/>
    <property type="evidence" value="ECO:0007669"/>
    <property type="project" value="Ensembl"/>
</dbReference>
<dbReference type="GO" id="GO:1902533">
    <property type="term" value="P:positive regulation of intracellular signal transduction"/>
    <property type="evidence" value="ECO:0000314"/>
    <property type="project" value="BHF-UCL"/>
</dbReference>
<dbReference type="GO" id="GO:0045944">
    <property type="term" value="P:positive regulation of transcription by RNA polymerase II"/>
    <property type="evidence" value="ECO:0007669"/>
    <property type="project" value="Ensembl"/>
</dbReference>
<dbReference type="GO" id="GO:0050821">
    <property type="term" value="P:protein stabilization"/>
    <property type="evidence" value="ECO:0000314"/>
    <property type="project" value="BHF-UCL"/>
</dbReference>
<dbReference type="GO" id="GO:1902068">
    <property type="term" value="P:regulation of sphingolipid mediated signaling pathway"/>
    <property type="evidence" value="ECO:0000315"/>
    <property type="project" value="MGI"/>
</dbReference>
<dbReference type="GO" id="GO:0030111">
    <property type="term" value="P:regulation of Wnt signaling pathway"/>
    <property type="evidence" value="ECO:0000314"/>
    <property type="project" value="MGI"/>
</dbReference>
<dbReference type="GO" id="GO:0006890">
    <property type="term" value="P:retrograde vesicle-mediated transport, Golgi to endoplasmic reticulum"/>
    <property type="evidence" value="ECO:0000250"/>
    <property type="project" value="UniProtKB"/>
</dbReference>
<dbReference type="GO" id="GO:0006670">
    <property type="term" value="P:sphingosine metabolic process"/>
    <property type="evidence" value="ECO:0000250"/>
    <property type="project" value="UniProtKB"/>
</dbReference>
<dbReference type="CDD" id="cd03384">
    <property type="entry name" value="PAP2_wunen"/>
    <property type="match status" value="1"/>
</dbReference>
<dbReference type="FunFam" id="1.20.144.10:FF:000013">
    <property type="entry name" value="Phospholipid phosphatase 3"/>
    <property type="match status" value="1"/>
</dbReference>
<dbReference type="Gene3D" id="1.20.144.10">
    <property type="entry name" value="Phosphatidic acid phosphatase type 2/haloperoxidase"/>
    <property type="match status" value="1"/>
</dbReference>
<dbReference type="InterPro" id="IPR036938">
    <property type="entry name" value="P_Acid_Pase_2/haloperoxi_sf"/>
</dbReference>
<dbReference type="InterPro" id="IPR000326">
    <property type="entry name" value="P_Acid_Pase_2/haloperoxidase"/>
</dbReference>
<dbReference type="InterPro" id="IPR043216">
    <property type="entry name" value="PA_PP_rel"/>
</dbReference>
<dbReference type="PANTHER" id="PTHR10165">
    <property type="entry name" value="LIPID PHOSPHATE PHOSPHATASE"/>
    <property type="match status" value="1"/>
</dbReference>
<dbReference type="PANTHER" id="PTHR10165:SF79">
    <property type="entry name" value="PHOSPHOLIPID PHOSPHATASE 3"/>
    <property type="match status" value="1"/>
</dbReference>
<dbReference type="Pfam" id="PF01569">
    <property type="entry name" value="PAP2"/>
    <property type="match status" value="1"/>
</dbReference>
<dbReference type="SMART" id="SM00014">
    <property type="entry name" value="acidPPc"/>
    <property type="match status" value="1"/>
</dbReference>
<dbReference type="SUPFAM" id="SSF48317">
    <property type="entry name" value="Acid phosphatase/Vanadium-dependent haloperoxidase"/>
    <property type="match status" value="1"/>
</dbReference>
<name>PLPP3_MOUSE</name>